<reference key="1">
    <citation type="submission" date="2000-10" db="EMBL/GenBank/DDBJ databases">
        <title>Characterization of novel interferon responsive genes.</title>
        <authorList>
            <person name="Dron M."/>
            <person name="Meritet J.F."/>
            <person name="Tovey M.G."/>
        </authorList>
    </citation>
    <scope>NUCLEOTIDE SEQUENCE [MRNA]</scope>
    <source>
        <tissue>Spleen</tissue>
    </source>
</reference>
<reference key="2">
    <citation type="journal article" date="2005" name="Science">
        <title>The transcriptional landscape of the mammalian genome.</title>
        <authorList>
            <person name="Carninci P."/>
            <person name="Kasukawa T."/>
            <person name="Katayama S."/>
            <person name="Gough J."/>
            <person name="Frith M.C."/>
            <person name="Maeda N."/>
            <person name="Oyama R."/>
            <person name="Ravasi T."/>
            <person name="Lenhard B."/>
            <person name="Wells C."/>
            <person name="Kodzius R."/>
            <person name="Shimokawa K."/>
            <person name="Bajic V.B."/>
            <person name="Brenner S.E."/>
            <person name="Batalov S."/>
            <person name="Forrest A.R."/>
            <person name="Zavolan M."/>
            <person name="Davis M.J."/>
            <person name="Wilming L.G."/>
            <person name="Aidinis V."/>
            <person name="Allen J.E."/>
            <person name="Ambesi-Impiombato A."/>
            <person name="Apweiler R."/>
            <person name="Aturaliya R.N."/>
            <person name="Bailey T.L."/>
            <person name="Bansal M."/>
            <person name="Baxter L."/>
            <person name="Beisel K.W."/>
            <person name="Bersano T."/>
            <person name="Bono H."/>
            <person name="Chalk A.M."/>
            <person name="Chiu K.P."/>
            <person name="Choudhary V."/>
            <person name="Christoffels A."/>
            <person name="Clutterbuck D.R."/>
            <person name="Crowe M.L."/>
            <person name="Dalla E."/>
            <person name="Dalrymple B.P."/>
            <person name="de Bono B."/>
            <person name="Della Gatta G."/>
            <person name="di Bernardo D."/>
            <person name="Down T."/>
            <person name="Engstrom P."/>
            <person name="Fagiolini M."/>
            <person name="Faulkner G."/>
            <person name="Fletcher C.F."/>
            <person name="Fukushima T."/>
            <person name="Furuno M."/>
            <person name="Futaki S."/>
            <person name="Gariboldi M."/>
            <person name="Georgii-Hemming P."/>
            <person name="Gingeras T.R."/>
            <person name="Gojobori T."/>
            <person name="Green R.E."/>
            <person name="Gustincich S."/>
            <person name="Harbers M."/>
            <person name="Hayashi Y."/>
            <person name="Hensch T.K."/>
            <person name="Hirokawa N."/>
            <person name="Hill D."/>
            <person name="Huminiecki L."/>
            <person name="Iacono M."/>
            <person name="Ikeo K."/>
            <person name="Iwama A."/>
            <person name="Ishikawa T."/>
            <person name="Jakt M."/>
            <person name="Kanapin A."/>
            <person name="Katoh M."/>
            <person name="Kawasawa Y."/>
            <person name="Kelso J."/>
            <person name="Kitamura H."/>
            <person name="Kitano H."/>
            <person name="Kollias G."/>
            <person name="Krishnan S.P."/>
            <person name="Kruger A."/>
            <person name="Kummerfeld S.K."/>
            <person name="Kurochkin I.V."/>
            <person name="Lareau L.F."/>
            <person name="Lazarevic D."/>
            <person name="Lipovich L."/>
            <person name="Liu J."/>
            <person name="Liuni S."/>
            <person name="McWilliam S."/>
            <person name="Madan Babu M."/>
            <person name="Madera M."/>
            <person name="Marchionni L."/>
            <person name="Matsuda H."/>
            <person name="Matsuzawa S."/>
            <person name="Miki H."/>
            <person name="Mignone F."/>
            <person name="Miyake S."/>
            <person name="Morris K."/>
            <person name="Mottagui-Tabar S."/>
            <person name="Mulder N."/>
            <person name="Nakano N."/>
            <person name="Nakauchi H."/>
            <person name="Ng P."/>
            <person name="Nilsson R."/>
            <person name="Nishiguchi S."/>
            <person name="Nishikawa S."/>
            <person name="Nori F."/>
            <person name="Ohara O."/>
            <person name="Okazaki Y."/>
            <person name="Orlando V."/>
            <person name="Pang K.C."/>
            <person name="Pavan W.J."/>
            <person name="Pavesi G."/>
            <person name="Pesole G."/>
            <person name="Petrovsky N."/>
            <person name="Piazza S."/>
            <person name="Reed J."/>
            <person name="Reid J.F."/>
            <person name="Ring B.Z."/>
            <person name="Ringwald M."/>
            <person name="Rost B."/>
            <person name="Ruan Y."/>
            <person name="Salzberg S.L."/>
            <person name="Sandelin A."/>
            <person name="Schneider C."/>
            <person name="Schoenbach C."/>
            <person name="Sekiguchi K."/>
            <person name="Semple C.A."/>
            <person name="Seno S."/>
            <person name="Sessa L."/>
            <person name="Sheng Y."/>
            <person name="Shibata Y."/>
            <person name="Shimada H."/>
            <person name="Shimada K."/>
            <person name="Silva D."/>
            <person name="Sinclair B."/>
            <person name="Sperling S."/>
            <person name="Stupka E."/>
            <person name="Sugiura K."/>
            <person name="Sultana R."/>
            <person name="Takenaka Y."/>
            <person name="Taki K."/>
            <person name="Tammoja K."/>
            <person name="Tan S.L."/>
            <person name="Tang S."/>
            <person name="Taylor M.S."/>
            <person name="Tegner J."/>
            <person name="Teichmann S.A."/>
            <person name="Ueda H.R."/>
            <person name="van Nimwegen E."/>
            <person name="Verardo R."/>
            <person name="Wei C.L."/>
            <person name="Yagi K."/>
            <person name="Yamanishi H."/>
            <person name="Zabarovsky E."/>
            <person name="Zhu S."/>
            <person name="Zimmer A."/>
            <person name="Hide W."/>
            <person name="Bult C."/>
            <person name="Grimmond S.M."/>
            <person name="Teasdale R.D."/>
            <person name="Liu E.T."/>
            <person name="Brusic V."/>
            <person name="Quackenbush J."/>
            <person name="Wahlestedt C."/>
            <person name="Mattick J.S."/>
            <person name="Hume D.A."/>
            <person name="Kai C."/>
            <person name="Sasaki D."/>
            <person name="Tomaru Y."/>
            <person name="Fukuda S."/>
            <person name="Kanamori-Katayama M."/>
            <person name="Suzuki M."/>
            <person name="Aoki J."/>
            <person name="Arakawa T."/>
            <person name="Iida J."/>
            <person name="Imamura K."/>
            <person name="Itoh M."/>
            <person name="Kato T."/>
            <person name="Kawaji H."/>
            <person name="Kawagashira N."/>
            <person name="Kawashima T."/>
            <person name="Kojima M."/>
            <person name="Kondo S."/>
            <person name="Konno H."/>
            <person name="Nakano K."/>
            <person name="Ninomiya N."/>
            <person name="Nishio T."/>
            <person name="Okada M."/>
            <person name="Plessy C."/>
            <person name="Shibata K."/>
            <person name="Shiraki T."/>
            <person name="Suzuki S."/>
            <person name="Tagami M."/>
            <person name="Waki K."/>
            <person name="Watahiki A."/>
            <person name="Okamura-Oho Y."/>
            <person name="Suzuki H."/>
            <person name="Kawai J."/>
            <person name="Hayashizaki Y."/>
        </authorList>
    </citation>
    <scope>NUCLEOTIDE SEQUENCE [LARGE SCALE MRNA]</scope>
    <source>
        <strain>C57BL/6J</strain>
        <strain>NOD</strain>
        <tissue>Cecum</tissue>
        <tissue>Spleen</tissue>
        <tissue>Thymus</tissue>
    </source>
</reference>
<reference key="3">
    <citation type="journal article" date="2004" name="Genome Res.">
        <title>The status, quality, and expansion of the NIH full-length cDNA project: the Mammalian Gene Collection (MGC).</title>
        <authorList>
            <consortium name="The MGC Project Team"/>
        </authorList>
    </citation>
    <scope>NUCLEOTIDE SEQUENCE [LARGE SCALE MRNA]</scope>
</reference>
<accession>Q8BV66</accession>
<accession>Q9ER37</accession>
<protein>
    <recommendedName>
        <fullName>Interferon-induced protein 44</fullName>
    </recommendedName>
    <alternativeName>
        <fullName>Microtubule-associated protein 44</fullName>
    </alternativeName>
</protein>
<proteinExistence type="evidence at transcript level"/>
<keyword id="KW-0963">Cytoplasm</keyword>
<keyword id="KW-1185">Reference proteome</keyword>
<name>IFI44_MOUSE</name>
<evidence type="ECO:0000250" key="1"/>
<evidence type="ECO:0000255" key="2">
    <source>
        <dbReference type="PROSITE-ProRule" id="PRU01234"/>
    </source>
</evidence>
<evidence type="ECO:0000305" key="3"/>
<dbReference type="EMBL" id="AJ299405">
    <property type="protein sequence ID" value="CAC13979.1"/>
    <property type="molecule type" value="mRNA"/>
</dbReference>
<dbReference type="EMBL" id="AK079749">
    <property type="protein sequence ID" value="BAC37740.1"/>
    <property type="molecule type" value="mRNA"/>
</dbReference>
<dbReference type="EMBL" id="AK136553">
    <property type="protein sequence ID" value="BAE23041.1"/>
    <property type="molecule type" value="mRNA"/>
</dbReference>
<dbReference type="EMBL" id="AK171676">
    <property type="protein sequence ID" value="BAE42605.1"/>
    <property type="molecule type" value="mRNA"/>
</dbReference>
<dbReference type="EMBL" id="BC111882">
    <property type="protein sequence ID" value="AAI11883.1"/>
    <property type="molecule type" value="mRNA"/>
</dbReference>
<dbReference type="CCDS" id="CCDS17911.1"/>
<dbReference type="RefSeq" id="NP_598632.2">
    <property type="nucleotide sequence ID" value="NM_133871.3"/>
</dbReference>
<dbReference type="BioGRID" id="221342">
    <property type="interactions" value="2"/>
</dbReference>
<dbReference type="FunCoup" id="Q8BV66">
    <property type="interactions" value="4"/>
</dbReference>
<dbReference type="STRING" id="10090.ENSMUSP00000029671"/>
<dbReference type="GlyGen" id="Q8BV66">
    <property type="glycosylation" value="1 site, 1 N-linked glycan (1 site)"/>
</dbReference>
<dbReference type="iPTMnet" id="Q8BV66"/>
<dbReference type="PhosphoSitePlus" id="Q8BV66"/>
<dbReference type="SwissPalm" id="Q8BV66"/>
<dbReference type="PaxDb" id="10090-ENSMUSP00000029671"/>
<dbReference type="PeptideAtlas" id="Q8BV66"/>
<dbReference type="ProteomicsDB" id="266949"/>
<dbReference type="Antibodypedia" id="19746">
    <property type="antibodies" value="150 antibodies from 24 providers"/>
</dbReference>
<dbReference type="DNASU" id="99899"/>
<dbReference type="Ensembl" id="ENSMUST00000029671.9">
    <property type="protein sequence ID" value="ENSMUSP00000029671.8"/>
    <property type="gene ID" value="ENSMUSG00000028037.14"/>
</dbReference>
<dbReference type="GeneID" id="99899"/>
<dbReference type="KEGG" id="mmu:99899"/>
<dbReference type="UCSC" id="uc008rsk.2">
    <property type="organism name" value="mouse"/>
</dbReference>
<dbReference type="AGR" id="MGI:2443016"/>
<dbReference type="CTD" id="10561"/>
<dbReference type="MGI" id="MGI:2443016">
    <property type="gene designation" value="Ifi44"/>
</dbReference>
<dbReference type="VEuPathDB" id="HostDB:ENSMUSG00000028037"/>
<dbReference type="eggNOG" id="ENOG502QQ57">
    <property type="taxonomic scope" value="Eukaryota"/>
</dbReference>
<dbReference type="GeneTree" id="ENSGT00940000162964"/>
<dbReference type="HOGENOM" id="CLU_049888_3_1_1"/>
<dbReference type="InParanoid" id="Q8BV66"/>
<dbReference type="OMA" id="NSMKPIT"/>
<dbReference type="OrthoDB" id="25620at2759"/>
<dbReference type="PhylomeDB" id="Q8BV66"/>
<dbReference type="TreeFam" id="TF328728"/>
<dbReference type="Reactome" id="R-MMU-9909505">
    <property type="pathway name" value="Modulation of host responses by IFN-stimulated genes"/>
</dbReference>
<dbReference type="BioGRID-ORCS" id="99899">
    <property type="hits" value="0 hits in 76 CRISPR screens"/>
</dbReference>
<dbReference type="ChiTaRS" id="Ifi44">
    <property type="organism name" value="mouse"/>
</dbReference>
<dbReference type="PRO" id="PR:Q8BV66"/>
<dbReference type="Proteomes" id="UP000000589">
    <property type="component" value="Chromosome 3"/>
</dbReference>
<dbReference type="RNAct" id="Q8BV66">
    <property type="molecule type" value="protein"/>
</dbReference>
<dbReference type="Bgee" id="ENSMUSG00000028037">
    <property type="expression patterns" value="Expressed in small intestine Peyer's patch and 103 other cell types or tissues"/>
</dbReference>
<dbReference type="GO" id="GO:0005737">
    <property type="term" value="C:cytoplasm"/>
    <property type="evidence" value="ECO:0007669"/>
    <property type="project" value="UniProtKB-SubCell"/>
</dbReference>
<dbReference type="GO" id="GO:0098586">
    <property type="term" value="P:cellular response to virus"/>
    <property type="evidence" value="ECO:0000314"/>
    <property type="project" value="MGI"/>
</dbReference>
<dbReference type="GO" id="GO:0009617">
    <property type="term" value="P:response to bacterium"/>
    <property type="evidence" value="ECO:0000270"/>
    <property type="project" value="MGI"/>
</dbReference>
<dbReference type="FunFam" id="3.40.50.300:FF:001535">
    <property type="entry name" value="Interferon induced protein 44"/>
    <property type="match status" value="1"/>
</dbReference>
<dbReference type="Gene3D" id="3.40.50.300">
    <property type="entry name" value="P-loop containing nucleotide triphosphate hydrolases"/>
    <property type="match status" value="1"/>
</dbReference>
<dbReference type="InterPro" id="IPR027417">
    <property type="entry name" value="P-loop_NTPase"/>
</dbReference>
<dbReference type="InterPro" id="IPR006571">
    <property type="entry name" value="TLDc_dom"/>
</dbReference>
<dbReference type="PANTHER" id="PTHR14241">
    <property type="entry name" value="INTERFERON-INDUCED PROTEIN 44"/>
    <property type="match status" value="1"/>
</dbReference>
<dbReference type="PANTHER" id="PTHR14241:SF3">
    <property type="entry name" value="INTERFERON-INDUCED PROTEIN 44"/>
    <property type="match status" value="1"/>
</dbReference>
<dbReference type="SUPFAM" id="SSF52540">
    <property type="entry name" value="P-loop containing nucleoside triphosphate hydrolases"/>
    <property type="match status" value="1"/>
</dbReference>
<dbReference type="PROSITE" id="PS51886">
    <property type="entry name" value="TLDC"/>
    <property type="match status" value="1"/>
</dbReference>
<comment type="function">
    <text evidence="1">This protein aggregates to form microtubular structures.</text>
</comment>
<comment type="subcellular location">
    <subcellularLocation>
        <location evidence="3">Cytoplasm</location>
    </subcellularLocation>
</comment>
<comment type="similarity">
    <text evidence="3">Belongs to the IFI44 family.</text>
</comment>
<sequence length="422" mass="47852">MAMRTRLTWQQEKCLQNYFGGKRFCLLYKASVQKFSHQNLLCTCENQGPTMIVVYSEKCVIGMYLKEGFQGKDVSITIFALQETGFSLCAKGPDSPYLLFHKRKTNDFSILLDEKAVIVSSAICKMLQLTARNNVIPIQECEAFRCEELLDERKTRGIAVLHSNLLQALRDYKPYGDLVQQTRVLLLGPIGAGKSSFVNSVKSVFKGSITHQILVGCDEDGISDKYRTYSIKAKDDSDPLPFILCDSLGLGENAGLHTDDVWHILKGHTPDRYQFDSMKPITSNHPNYTHDPLLKDRIHCVVFVFDINSFEMHSSELVAKIKKIRRDLIKHGILHLALLTHVDSLDLITKEDMTDIYNYSPVKSKLEAFHGVFGFALSDILVVSNYVSEWQLDPVKDMLILSALKEILYTANEFLEDLPLNK</sequence>
<feature type="chain" id="PRO_0000337871" description="Interferon-induced protein 44">
    <location>
        <begin position="1"/>
        <end position="422"/>
    </location>
</feature>
<feature type="domain" description="TLDc" evidence="2">
    <location>
        <begin position="1"/>
        <end position="147"/>
    </location>
</feature>
<feature type="sequence conflict" description="In Ref. 1; CAC13979 and 3; AAI11883." evidence="3" ref="1 3">
    <original>A</original>
    <variation>V</variation>
    <location>
        <position position="233"/>
    </location>
</feature>
<gene>
    <name type="primary">Ifi44</name>
    <name type="synonym">Mtap44</name>
</gene>
<organism>
    <name type="scientific">Mus musculus</name>
    <name type="common">Mouse</name>
    <dbReference type="NCBI Taxonomy" id="10090"/>
    <lineage>
        <taxon>Eukaryota</taxon>
        <taxon>Metazoa</taxon>
        <taxon>Chordata</taxon>
        <taxon>Craniata</taxon>
        <taxon>Vertebrata</taxon>
        <taxon>Euteleostomi</taxon>
        <taxon>Mammalia</taxon>
        <taxon>Eutheria</taxon>
        <taxon>Euarchontoglires</taxon>
        <taxon>Glires</taxon>
        <taxon>Rodentia</taxon>
        <taxon>Myomorpha</taxon>
        <taxon>Muroidea</taxon>
        <taxon>Muridae</taxon>
        <taxon>Murinae</taxon>
        <taxon>Mus</taxon>
        <taxon>Mus</taxon>
    </lineage>
</organism>